<accession>Q4ZQ66</accession>
<dbReference type="EC" id="2.4.2.21" evidence="1"/>
<dbReference type="EMBL" id="CP000075">
    <property type="protein sequence ID" value="AAY38706.1"/>
    <property type="molecule type" value="Genomic_DNA"/>
</dbReference>
<dbReference type="RefSeq" id="WP_011268579.1">
    <property type="nucleotide sequence ID" value="NC_007005.1"/>
</dbReference>
<dbReference type="RefSeq" id="YP_236744.1">
    <property type="nucleotide sequence ID" value="NC_007005.1"/>
</dbReference>
<dbReference type="SMR" id="Q4ZQ66"/>
<dbReference type="STRING" id="205918.Psyr_3674"/>
<dbReference type="KEGG" id="psb:Psyr_3674"/>
<dbReference type="PATRIC" id="fig|205918.7.peg.3775"/>
<dbReference type="eggNOG" id="COG2038">
    <property type="taxonomic scope" value="Bacteria"/>
</dbReference>
<dbReference type="HOGENOM" id="CLU_002982_0_1_6"/>
<dbReference type="OrthoDB" id="9781491at2"/>
<dbReference type="UniPathway" id="UPA00061">
    <property type="reaction ID" value="UER00516"/>
</dbReference>
<dbReference type="Proteomes" id="UP000000426">
    <property type="component" value="Chromosome"/>
</dbReference>
<dbReference type="GO" id="GO:0008939">
    <property type="term" value="F:nicotinate-nucleotide-dimethylbenzimidazole phosphoribosyltransferase activity"/>
    <property type="evidence" value="ECO:0007669"/>
    <property type="project" value="UniProtKB-UniRule"/>
</dbReference>
<dbReference type="GO" id="GO:0009236">
    <property type="term" value="P:cobalamin biosynthetic process"/>
    <property type="evidence" value="ECO:0007669"/>
    <property type="project" value="UniProtKB-KW"/>
</dbReference>
<dbReference type="CDD" id="cd02439">
    <property type="entry name" value="DMB-PRT_CobT"/>
    <property type="match status" value="1"/>
</dbReference>
<dbReference type="FunFam" id="3.40.50.10210:FF:000001">
    <property type="entry name" value="Nicotinate-nucleotide--dimethylbenzimidazole phosphoribosyltransferase"/>
    <property type="match status" value="1"/>
</dbReference>
<dbReference type="Gene3D" id="1.10.1610.10">
    <property type="match status" value="1"/>
</dbReference>
<dbReference type="Gene3D" id="3.40.50.10210">
    <property type="match status" value="1"/>
</dbReference>
<dbReference type="HAMAP" id="MF_00230">
    <property type="entry name" value="CobT"/>
    <property type="match status" value="1"/>
</dbReference>
<dbReference type="InterPro" id="IPR003200">
    <property type="entry name" value="Nict_dMeBzImd_PRibTrfase"/>
</dbReference>
<dbReference type="InterPro" id="IPR017846">
    <property type="entry name" value="Nict_dMeBzImd_PRibTrfase_bact"/>
</dbReference>
<dbReference type="InterPro" id="IPR023195">
    <property type="entry name" value="Nict_dMeBzImd_PRibTrfase_N"/>
</dbReference>
<dbReference type="InterPro" id="IPR036087">
    <property type="entry name" value="Nict_dMeBzImd_PRibTrfase_sf"/>
</dbReference>
<dbReference type="NCBIfam" id="TIGR03160">
    <property type="entry name" value="cobT_DBIPRT"/>
    <property type="match status" value="1"/>
</dbReference>
<dbReference type="NCBIfam" id="NF000996">
    <property type="entry name" value="PRK00105.1"/>
    <property type="match status" value="1"/>
</dbReference>
<dbReference type="PANTHER" id="PTHR43463">
    <property type="entry name" value="NICOTINATE-NUCLEOTIDE--DIMETHYLBENZIMIDAZOLE PHOSPHORIBOSYLTRANSFERASE"/>
    <property type="match status" value="1"/>
</dbReference>
<dbReference type="PANTHER" id="PTHR43463:SF1">
    <property type="entry name" value="NICOTINATE-NUCLEOTIDE--DIMETHYLBENZIMIDAZOLE PHOSPHORIBOSYLTRANSFERASE"/>
    <property type="match status" value="1"/>
</dbReference>
<dbReference type="Pfam" id="PF02277">
    <property type="entry name" value="DBI_PRT"/>
    <property type="match status" value="1"/>
</dbReference>
<dbReference type="SUPFAM" id="SSF52733">
    <property type="entry name" value="Nicotinate mononucleotide:5,6-dimethylbenzimidazole phosphoribosyltransferase (CobT)"/>
    <property type="match status" value="1"/>
</dbReference>
<proteinExistence type="inferred from homology"/>
<sequence>MSNSWWLKPAQAIDVPMREAALARQQQLTKPAGSLAQLERLAVQLAGLQGRERPAVDQLWIAIFAADHGVVAEGVSAYPQEVTGQMLHNFVNGGAAISVLARQLSAQLDVVDLGTVSPMDLPGVRHLRIGAGTANFAHGPAMSVEQGLAALQAGRDSVLRAKAVGTELFIGGEMGIGNTTAASAVACSLLECAAPLLVGPGTGLNAEGIQHKTRVIERALALHAEQAGDPLNSLFCLGGFEIAALAGAYLACAQEGIAVLVDGFICSVAALVAVRLNPSCRNWLLFGHRGAEPGHRHLLETLQAEPLLDLGLRLGEGSGAALAVPLVRLACELHNGMATFAEAAVADRPA</sequence>
<name>COBT_PSEU2</name>
<feature type="chain" id="PRO_1000021619" description="Nicotinate-nucleotide--dimethylbenzimidazole phosphoribosyltransferase">
    <location>
        <begin position="1"/>
        <end position="350"/>
    </location>
</feature>
<feature type="active site" description="Proton acceptor" evidence="1">
    <location>
        <position position="316"/>
    </location>
</feature>
<comment type="function">
    <text evidence="1">Catalyzes the synthesis of alpha-ribazole-5'-phosphate from nicotinate mononucleotide (NAMN) and 5,6-dimethylbenzimidazole (DMB).</text>
</comment>
<comment type="catalytic activity">
    <reaction evidence="1">
        <text>5,6-dimethylbenzimidazole + nicotinate beta-D-ribonucleotide = alpha-ribazole 5'-phosphate + nicotinate + H(+)</text>
        <dbReference type="Rhea" id="RHEA:11196"/>
        <dbReference type="ChEBI" id="CHEBI:15378"/>
        <dbReference type="ChEBI" id="CHEBI:15890"/>
        <dbReference type="ChEBI" id="CHEBI:32544"/>
        <dbReference type="ChEBI" id="CHEBI:57502"/>
        <dbReference type="ChEBI" id="CHEBI:57918"/>
        <dbReference type="EC" id="2.4.2.21"/>
    </reaction>
</comment>
<comment type="pathway">
    <text evidence="1">Nucleoside biosynthesis; alpha-ribazole biosynthesis; alpha-ribazole from 5,6-dimethylbenzimidazole: step 1/2.</text>
</comment>
<comment type="similarity">
    <text evidence="1">Belongs to the CobT family.</text>
</comment>
<organism>
    <name type="scientific">Pseudomonas syringae pv. syringae (strain B728a)</name>
    <dbReference type="NCBI Taxonomy" id="205918"/>
    <lineage>
        <taxon>Bacteria</taxon>
        <taxon>Pseudomonadati</taxon>
        <taxon>Pseudomonadota</taxon>
        <taxon>Gammaproteobacteria</taxon>
        <taxon>Pseudomonadales</taxon>
        <taxon>Pseudomonadaceae</taxon>
        <taxon>Pseudomonas</taxon>
        <taxon>Pseudomonas syringae</taxon>
    </lineage>
</organism>
<keyword id="KW-0169">Cobalamin biosynthesis</keyword>
<keyword id="KW-0328">Glycosyltransferase</keyword>
<keyword id="KW-0808">Transferase</keyword>
<gene>
    <name evidence="1" type="primary">cobT</name>
    <name type="ordered locus">Psyr_3674</name>
</gene>
<protein>
    <recommendedName>
        <fullName evidence="1">Nicotinate-nucleotide--dimethylbenzimidazole phosphoribosyltransferase</fullName>
        <shortName evidence="1">NN:DBI PRT</shortName>
        <ecNumber evidence="1">2.4.2.21</ecNumber>
    </recommendedName>
    <alternativeName>
        <fullName evidence="1">N(1)-alpha-phosphoribosyltransferase</fullName>
    </alternativeName>
</protein>
<evidence type="ECO:0000255" key="1">
    <source>
        <dbReference type="HAMAP-Rule" id="MF_00230"/>
    </source>
</evidence>
<reference key="1">
    <citation type="journal article" date="2005" name="Proc. Natl. Acad. Sci. U.S.A.">
        <title>Comparison of the complete genome sequences of Pseudomonas syringae pv. syringae B728a and pv. tomato DC3000.</title>
        <authorList>
            <person name="Feil H."/>
            <person name="Feil W.S."/>
            <person name="Chain P."/>
            <person name="Larimer F."/>
            <person name="Dibartolo G."/>
            <person name="Copeland A."/>
            <person name="Lykidis A."/>
            <person name="Trong S."/>
            <person name="Nolan M."/>
            <person name="Goltsman E."/>
            <person name="Thiel J."/>
            <person name="Malfatti S."/>
            <person name="Loper J.E."/>
            <person name="Lapidus A."/>
            <person name="Detter J.C."/>
            <person name="Land M."/>
            <person name="Richardson P.M."/>
            <person name="Kyrpides N.C."/>
            <person name="Ivanova N."/>
            <person name="Lindow S.E."/>
        </authorList>
    </citation>
    <scope>NUCLEOTIDE SEQUENCE [LARGE SCALE GENOMIC DNA]</scope>
    <source>
        <strain>B728a</strain>
    </source>
</reference>